<proteinExistence type="inferred from homology"/>
<reference key="1">
    <citation type="journal article" date="2003" name="Nature">
        <title>The genome of a motile marine Synechococcus.</title>
        <authorList>
            <person name="Palenik B."/>
            <person name="Brahamsha B."/>
            <person name="Larimer F.W."/>
            <person name="Land M.L."/>
            <person name="Hauser L."/>
            <person name="Chain P."/>
            <person name="Lamerdin J.E."/>
            <person name="Regala W."/>
            <person name="Allen E.E."/>
            <person name="McCarren J."/>
            <person name="Paulsen I.T."/>
            <person name="Dufresne A."/>
            <person name="Partensky F."/>
            <person name="Webb E.A."/>
            <person name="Waterbury J."/>
        </authorList>
    </citation>
    <scope>NUCLEOTIDE SEQUENCE [LARGE SCALE GENOMIC DNA]</scope>
    <source>
        <strain>WH8102</strain>
    </source>
</reference>
<organism>
    <name type="scientific">Parasynechococcus marenigrum (strain WH8102)</name>
    <dbReference type="NCBI Taxonomy" id="84588"/>
    <lineage>
        <taxon>Bacteria</taxon>
        <taxon>Bacillati</taxon>
        <taxon>Cyanobacteriota</taxon>
        <taxon>Cyanophyceae</taxon>
        <taxon>Synechococcales</taxon>
        <taxon>Prochlorococcaceae</taxon>
        <taxon>Parasynechococcus</taxon>
        <taxon>Parasynechococcus marenigrum</taxon>
    </lineage>
</organism>
<comment type="function">
    <text evidence="1">Catalyzes the synthesis of GMP from XMP.</text>
</comment>
<comment type="catalytic activity">
    <reaction evidence="1">
        <text>XMP + L-glutamine + ATP + H2O = GMP + L-glutamate + AMP + diphosphate + 2 H(+)</text>
        <dbReference type="Rhea" id="RHEA:11680"/>
        <dbReference type="ChEBI" id="CHEBI:15377"/>
        <dbReference type="ChEBI" id="CHEBI:15378"/>
        <dbReference type="ChEBI" id="CHEBI:29985"/>
        <dbReference type="ChEBI" id="CHEBI:30616"/>
        <dbReference type="ChEBI" id="CHEBI:33019"/>
        <dbReference type="ChEBI" id="CHEBI:57464"/>
        <dbReference type="ChEBI" id="CHEBI:58115"/>
        <dbReference type="ChEBI" id="CHEBI:58359"/>
        <dbReference type="ChEBI" id="CHEBI:456215"/>
        <dbReference type="EC" id="6.3.5.2"/>
    </reaction>
</comment>
<comment type="pathway">
    <text evidence="1">Purine metabolism; GMP biosynthesis; GMP from XMP (L-Gln route): step 1/1.</text>
</comment>
<comment type="subunit">
    <text evidence="1">Homodimer.</text>
</comment>
<dbReference type="EC" id="6.3.5.2" evidence="1"/>
<dbReference type="EMBL" id="BX569689">
    <property type="protein sequence ID" value="CAE06562.1"/>
    <property type="molecule type" value="Genomic_DNA"/>
</dbReference>
<dbReference type="RefSeq" id="WP_011126925.1">
    <property type="nucleotide sequence ID" value="NC_005070.1"/>
</dbReference>
<dbReference type="SMR" id="Q7UA53"/>
<dbReference type="STRING" id="84588.SYNW0047"/>
<dbReference type="MEROPS" id="C26.957"/>
<dbReference type="KEGG" id="syw:SYNW0047"/>
<dbReference type="eggNOG" id="COG0518">
    <property type="taxonomic scope" value="Bacteria"/>
</dbReference>
<dbReference type="eggNOG" id="COG0519">
    <property type="taxonomic scope" value="Bacteria"/>
</dbReference>
<dbReference type="HOGENOM" id="CLU_014340_0_5_3"/>
<dbReference type="UniPathway" id="UPA00189">
    <property type="reaction ID" value="UER00296"/>
</dbReference>
<dbReference type="Proteomes" id="UP000001422">
    <property type="component" value="Chromosome"/>
</dbReference>
<dbReference type="GO" id="GO:0005829">
    <property type="term" value="C:cytosol"/>
    <property type="evidence" value="ECO:0007669"/>
    <property type="project" value="TreeGrafter"/>
</dbReference>
<dbReference type="GO" id="GO:0005524">
    <property type="term" value="F:ATP binding"/>
    <property type="evidence" value="ECO:0007669"/>
    <property type="project" value="UniProtKB-UniRule"/>
</dbReference>
<dbReference type="GO" id="GO:0003921">
    <property type="term" value="F:GMP synthase activity"/>
    <property type="evidence" value="ECO:0007669"/>
    <property type="project" value="InterPro"/>
</dbReference>
<dbReference type="CDD" id="cd01742">
    <property type="entry name" value="GATase1_GMP_Synthase"/>
    <property type="match status" value="1"/>
</dbReference>
<dbReference type="CDD" id="cd01997">
    <property type="entry name" value="GMP_synthase_C"/>
    <property type="match status" value="1"/>
</dbReference>
<dbReference type="FunFam" id="3.30.300.10:FF:000002">
    <property type="entry name" value="GMP synthase [glutamine-hydrolyzing]"/>
    <property type="match status" value="1"/>
</dbReference>
<dbReference type="FunFam" id="3.40.50.620:FF:000001">
    <property type="entry name" value="GMP synthase [glutamine-hydrolyzing]"/>
    <property type="match status" value="1"/>
</dbReference>
<dbReference type="FunFam" id="3.40.50.880:FF:000001">
    <property type="entry name" value="GMP synthase [glutamine-hydrolyzing]"/>
    <property type="match status" value="1"/>
</dbReference>
<dbReference type="Gene3D" id="3.30.300.10">
    <property type="match status" value="1"/>
</dbReference>
<dbReference type="Gene3D" id="3.40.50.880">
    <property type="match status" value="1"/>
</dbReference>
<dbReference type="Gene3D" id="3.40.50.620">
    <property type="entry name" value="HUPs"/>
    <property type="match status" value="1"/>
</dbReference>
<dbReference type="HAMAP" id="MF_00344">
    <property type="entry name" value="GMP_synthase"/>
    <property type="match status" value="1"/>
</dbReference>
<dbReference type="InterPro" id="IPR029062">
    <property type="entry name" value="Class_I_gatase-like"/>
</dbReference>
<dbReference type="InterPro" id="IPR017926">
    <property type="entry name" value="GATASE"/>
</dbReference>
<dbReference type="InterPro" id="IPR001674">
    <property type="entry name" value="GMP_synth_C"/>
</dbReference>
<dbReference type="InterPro" id="IPR004739">
    <property type="entry name" value="GMP_synth_GATase"/>
</dbReference>
<dbReference type="InterPro" id="IPR022955">
    <property type="entry name" value="GMP_synthase"/>
</dbReference>
<dbReference type="InterPro" id="IPR025777">
    <property type="entry name" value="GMPS_ATP_PPase_dom"/>
</dbReference>
<dbReference type="InterPro" id="IPR014729">
    <property type="entry name" value="Rossmann-like_a/b/a_fold"/>
</dbReference>
<dbReference type="NCBIfam" id="TIGR00884">
    <property type="entry name" value="guaA_Cterm"/>
    <property type="match status" value="1"/>
</dbReference>
<dbReference type="NCBIfam" id="TIGR00888">
    <property type="entry name" value="guaA_Nterm"/>
    <property type="match status" value="1"/>
</dbReference>
<dbReference type="NCBIfam" id="NF000848">
    <property type="entry name" value="PRK00074.1"/>
    <property type="match status" value="1"/>
</dbReference>
<dbReference type="PANTHER" id="PTHR11922:SF2">
    <property type="entry name" value="GMP SYNTHASE [GLUTAMINE-HYDROLYZING]"/>
    <property type="match status" value="1"/>
</dbReference>
<dbReference type="PANTHER" id="PTHR11922">
    <property type="entry name" value="GMP SYNTHASE-RELATED"/>
    <property type="match status" value="1"/>
</dbReference>
<dbReference type="Pfam" id="PF00117">
    <property type="entry name" value="GATase"/>
    <property type="match status" value="1"/>
</dbReference>
<dbReference type="Pfam" id="PF00958">
    <property type="entry name" value="GMP_synt_C"/>
    <property type="match status" value="1"/>
</dbReference>
<dbReference type="PRINTS" id="PR00097">
    <property type="entry name" value="ANTSNTHASEII"/>
</dbReference>
<dbReference type="PRINTS" id="PR00099">
    <property type="entry name" value="CPSGATASE"/>
</dbReference>
<dbReference type="PRINTS" id="PR00096">
    <property type="entry name" value="GATASE"/>
</dbReference>
<dbReference type="SUPFAM" id="SSF52402">
    <property type="entry name" value="Adenine nucleotide alpha hydrolases-like"/>
    <property type="match status" value="1"/>
</dbReference>
<dbReference type="SUPFAM" id="SSF52317">
    <property type="entry name" value="Class I glutamine amidotransferase-like"/>
    <property type="match status" value="1"/>
</dbReference>
<dbReference type="SUPFAM" id="SSF54810">
    <property type="entry name" value="GMP synthetase C-terminal dimerisation domain"/>
    <property type="match status" value="1"/>
</dbReference>
<dbReference type="PROSITE" id="PS51273">
    <property type="entry name" value="GATASE_TYPE_1"/>
    <property type="match status" value="1"/>
</dbReference>
<dbReference type="PROSITE" id="PS51553">
    <property type="entry name" value="GMPS_ATP_PPASE"/>
    <property type="match status" value="1"/>
</dbReference>
<sequence length="528" mass="58640">MSQSSSDGQRQPAIVILDFGSQYSELIARRVRETEVFSVVLGYSTSAEELRAMQPKGIVLSGGPSSVYAEHAPLCDPAIWELGIPVLGVCYGMQLMVQQLGGVVEAASGKAEYGKAPLEVDDPTDLLTNVTGGSTMWMSHGDSVKALPEGFVRLAHTANTPEAAVAHLQRRLYGVQFHPEVVHSTCGMALIRNFVYHICGCEPDWTTSAFIDEAVAVVREQVGEKRVLLALSGGVDSSTLAFLLKKAIGDQLTCMFIDQGFMRKGEPEFLMDFFDRKFNIHVEYINARQRFISKLKGITDPEEKRKIIGTEFIRVFEEESKRLGPFDYLAQGTLYPDVIESAGTNVDPKTGERVAVKIKSHHNVGGLPKDLQFKLVEPLRKLFKDEVRKVGRALGLPEEIVRRHPFPGPGLAIRILGEVTDEKLNCLRDADLIVREEIREAGLYHEIWQAFAVLLPVRSVGVMGDKRTYAWPIVLRCVSSEDGMTADWSRLPYDLMETISNRIVNEVKGVNRVVLDITSKPPGTIEWE</sequence>
<feature type="chain" id="PRO_0000140195" description="GMP synthase [glutamine-hydrolyzing]">
    <location>
        <begin position="1"/>
        <end position="528"/>
    </location>
</feature>
<feature type="domain" description="Glutamine amidotransferase type-1" evidence="1">
    <location>
        <begin position="13"/>
        <end position="204"/>
    </location>
</feature>
<feature type="domain" description="GMPS ATP-PPase" evidence="1">
    <location>
        <begin position="205"/>
        <end position="403"/>
    </location>
</feature>
<feature type="active site" description="Nucleophile" evidence="1">
    <location>
        <position position="90"/>
    </location>
</feature>
<feature type="active site" evidence="1">
    <location>
        <position position="178"/>
    </location>
</feature>
<feature type="active site" evidence="1">
    <location>
        <position position="180"/>
    </location>
</feature>
<feature type="binding site" evidence="1">
    <location>
        <begin position="232"/>
        <end position="238"/>
    </location>
    <ligand>
        <name>ATP</name>
        <dbReference type="ChEBI" id="CHEBI:30616"/>
    </ligand>
</feature>
<protein>
    <recommendedName>
        <fullName evidence="1">GMP synthase [glutamine-hydrolyzing]</fullName>
        <ecNumber evidence="1">6.3.5.2</ecNumber>
    </recommendedName>
    <alternativeName>
        <fullName evidence="1">GMP synthetase</fullName>
    </alternativeName>
    <alternativeName>
        <fullName evidence="1">Glutamine amidotransferase</fullName>
    </alternativeName>
</protein>
<gene>
    <name evidence="1" type="primary">guaA</name>
    <name type="ordered locus">SYNW0047</name>
</gene>
<keyword id="KW-0067">ATP-binding</keyword>
<keyword id="KW-0315">Glutamine amidotransferase</keyword>
<keyword id="KW-0332">GMP biosynthesis</keyword>
<keyword id="KW-0436">Ligase</keyword>
<keyword id="KW-0547">Nucleotide-binding</keyword>
<keyword id="KW-0658">Purine biosynthesis</keyword>
<name>GUAA_PARMW</name>
<evidence type="ECO:0000255" key="1">
    <source>
        <dbReference type="HAMAP-Rule" id="MF_00344"/>
    </source>
</evidence>
<accession>Q7UA53</accession>